<reference key="1">
    <citation type="submission" date="2005-07" db="EMBL/GenBank/DDBJ databases">
        <authorList>
            <consortium name="NIH - Zebrafish Gene Collection (ZGC) project"/>
        </authorList>
    </citation>
    <scope>NUCLEOTIDE SEQUENCE [LARGE SCALE MRNA]</scope>
    <source>
        <tissue>Testis</tissue>
    </source>
</reference>
<dbReference type="EMBL" id="BC098884">
    <property type="protein sequence ID" value="AAH98884.1"/>
    <property type="molecule type" value="mRNA"/>
</dbReference>
<dbReference type="SMR" id="Q4KM14"/>
<dbReference type="FunCoup" id="Q4KM14">
    <property type="interactions" value="2227"/>
</dbReference>
<dbReference type="STRING" id="7955.ENSDARP00000073432"/>
<dbReference type="PaxDb" id="7955-ENSDARP00000073432"/>
<dbReference type="AGR" id="ZFIN:ZDB-GENE-040426-2386"/>
<dbReference type="ZFIN" id="ZDB-GENE-040426-2386">
    <property type="gene designation" value="trnau1apb"/>
</dbReference>
<dbReference type="eggNOG" id="KOG0118">
    <property type="taxonomic scope" value="Eukaryota"/>
</dbReference>
<dbReference type="InParanoid" id="Q4KM14"/>
<dbReference type="PhylomeDB" id="Q4KM14"/>
<dbReference type="PRO" id="PR:Q4KM14"/>
<dbReference type="Proteomes" id="UP000000437">
    <property type="component" value="Unplaced"/>
</dbReference>
<dbReference type="GO" id="GO:0005829">
    <property type="term" value="C:cytosol"/>
    <property type="evidence" value="ECO:0000318"/>
    <property type="project" value="GO_Central"/>
</dbReference>
<dbReference type="GO" id="GO:0005634">
    <property type="term" value="C:nucleus"/>
    <property type="evidence" value="ECO:0007669"/>
    <property type="project" value="UniProtKB-SubCell"/>
</dbReference>
<dbReference type="GO" id="GO:0003729">
    <property type="term" value="F:mRNA binding"/>
    <property type="evidence" value="ECO:0000318"/>
    <property type="project" value="GO_Central"/>
</dbReference>
<dbReference type="GO" id="GO:0006376">
    <property type="term" value="P:mRNA splice site recognition"/>
    <property type="evidence" value="ECO:0000318"/>
    <property type="project" value="GO_Central"/>
</dbReference>
<dbReference type="GO" id="GO:0006412">
    <property type="term" value="P:translation"/>
    <property type="evidence" value="ECO:0007669"/>
    <property type="project" value="UniProtKB-KW"/>
</dbReference>
<dbReference type="CDD" id="cd12610">
    <property type="entry name" value="RRM1_SECp43"/>
    <property type="match status" value="1"/>
</dbReference>
<dbReference type="CDD" id="cd12612">
    <property type="entry name" value="RRM2_SECp43"/>
    <property type="match status" value="1"/>
</dbReference>
<dbReference type="FunFam" id="3.30.70.330:FF:000166">
    <property type="entry name" value="Trna selenocysteine 1-associated protein 1"/>
    <property type="match status" value="1"/>
</dbReference>
<dbReference type="FunFam" id="3.30.70.330:FF:000159">
    <property type="entry name" value="tRNA selenocysteine 1-associated protein 1"/>
    <property type="match status" value="1"/>
</dbReference>
<dbReference type="Gene3D" id="3.30.70.330">
    <property type="match status" value="2"/>
</dbReference>
<dbReference type="InterPro" id="IPR012677">
    <property type="entry name" value="Nucleotide-bd_a/b_plait_sf"/>
</dbReference>
<dbReference type="InterPro" id="IPR035979">
    <property type="entry name" value="RBD_domain_sf"/>
</dbReference>
<dbReference type="InterPro" id="IPR000504">
    <property type="entry name" value="RRM_dom"/>
</dbReference>
<dbReference type="InterPro" id="IPR034510">
    <property type="entry name" value="SECp43_RRM2"/>
</dbReference>
<dbReference type="InterPro" id="IPR040434">
    <property type="entry name" value="TSAP1"/>
</dbReference>
<dbReference type="InterPro" id="IPR041085">
    <property type="entry name" value="TSAP1_C"/>
</dbReference>
<dbReference type="PANTHER" id="PTHR37457:SF1">
    <property type="entry name" value="SIMILAR TO HUMAN CHROMOSOME 6 OPEN READING FRAME 52"/>
    <property type="match status" value="1"/>
</dbReference>
<dbReference type="PANTHER" id="PTHR37457">
    <property type="entry name" value="TRNA SELENOCYSTEINE 1-ASSOCIATED PROTEIN 1-RELATED"/>
    <property type="match status" value="1"/>
</dbReference>
<dbReference type="Pfam" id="PF00076">
    <property type="entry name" value="RRM_1"/>
    <property type="match status" value="2"/>
</dbReference>
<dbReference type="Pfam" id="PF17654">
    <property type="entry name" value="Trnau1ap"/>
    <property type="match status" value="1"/>
</dbReference>
<dbReference type="SMART" id="SM00360">
    <property type="entry name" value="RRM"/>
    <property type="match status" value="2"/>
</dbReference>
<dbReference type="SUPFAM" id="SSF54928">
    <property type="entry name" value="RNA-binding domain, RBD"/>
    <property type="match status" value="2"/>
</dbReference>
<dbReference type="PROSITE" id="PS50102">
    <property type="entry name" value="RRM"/>
    <property type="match status" value="2"/>
</dbReference>
<evidence type="ECO:0000250" key="1"/>
<evidence type="ECO:0000255" key="2">
    <source>
        <dbReference type="PROSITE-ProRule" id="PRU00176"/>
    </source>
</evidence>
<evidence type="ECO:0000256" key="3">
    <source>
        <dbReference type="SAM" id="MobiDB-lite"/>
    </source>
</evidence>
<evidence type="ECO:0000305" key="4"/>
<keyword id="KW-0963">Cytoplasm</keyword>
<keyword id="KW-0539">Nucleus</keyword>
<keyword id="KW-0648">Protein biosynthesis</keyword>
<keyword id="KW-1185">Reference proteome</keyword>
<keyword id="KW-0677">Repeat</keyword>
<keyword id="KW-0694">RNA-binding</keyword>
<accession>Q4KM14</accession>
<gene>
    <name type="primary">trnau1apl</name>
    <name type="synonym">secp43</name>
    <name type="synonym">trnau1ap</name>
    <name type="synonym">trspap1</name>
    <name type="ORF">zgc:113964</name>
    <name type="ORF">zgc:77884</name>
</gene>
<comment type="function">
    <text evidence="1">Involved in the early steps of selenocysteine biosynthesis and tRNA(Sec) charging to the later steps resulting in the cotranslational incorporation of selenocysteine into selenoproteins.</text>
</comment>
<comment type="subcellular location">
    <subcellularLocation>
        <location evidence="1">Nucleus</location>
    </subcellularLocation>
    <subcellularLocation>
        <location evidence="1">Cytoplasm</location>
    </subcellularLocation>
</comment>
<comment type="similarity">
    <text evidence="4">Belongs to the RRM TRSPAP family.</text>
</comment>
<sequence length="316" mass="35853">MFNRMTSLWMGDLDPYMDENFIKQAFSTMGETAFGVKIITHRVTGGSAGYCFVEMADEASVDRCVQRLNGKLVPGSNPPRKFKLNYATYGKRPEPGPEFSVFVGDLTSEVDDYQLHQFFLKKFPSCKGAKVVTDPYGNSRGYGFVKFSDENEQKKALEEFQNASGLGGKPIRISIAVNKGNKASTYHNQNNTYNTNYQQQYYRQPYNSYYPQWGYDQYSGYNYGYNPYAAPPPMMGPPPPMGMPPMPPDMQGSTEAHDGTEEVEEDPSEDPNPQVDVEELNRQYMERSEELYDSLMECHWLPMDTITSDISMMNGS</sequence>
<feature type="chain" id="PRO_0000304921" description="tRNA selenocysteine 1-associated protein 1-like">
    <location>
        <begin position="1"/>
        <end position="316"/>
    </location>
</feature>
<feature type="domain" description="RRM 1" evidence="2">
    <location>
        <begin position="6"/>
        <end position="89"/>
    </location>
</feature>
<feature type="domain" description="RRM 2" evidence="2">
    <location>
        <begin position="99"/>
        <end position="178"/>
    </location>
</feature>
<feature type="region of interest" description="Disordered" evidence="3">
    <location>
        <begin position="239"/>
        <end position="285"/>
    </location>
</feature>
<feature type="compositionally biased region" description="Pro residues" evidence="3">
    <location>
        <begin position="239"/>
        <end position="248"/>
    </location>
</feature>
<protein>
    <recommendedName>
        <fullName>tRNA selenocysteine 1-associated protein 1-like</fullName>
    </recommendedName>
    <alternativeName>
        <fullName>tRNA selenocysteine 1-associated protein 1</fullName>
    </alternativeName>
    <alternativeName>
        <fullName>tRNA selenocysteine-associated protein 1</fullName>
    </alternativeName>
</protein>
<proteinExistence type="evidence at transcript level"/>
<name>TSP1L_DANRE</name>
<organism>
    <name type="scientific">Danio rerio</name>
    <name type="common">Zebrafish</name>
    <name type="synonym">Brachydanio rerio</name>
    <dbReference type="NCBI Taxonomy" id="7955"/>
    <lineage>
        <taxon>Eukaryota</taxon>
        <taxon>Metazoa</taxon>
        <taxon>Chordata</taxon>
        <taxon>Craniata</taxon>
        <taxon>Vertebrata</taxon>
        <taxon>Euteleostomi</taxon>
        <taxon>Actinopterygii</taxon>
        <taxon>Neopterygii</taxon>
        <taxon>Teleostei</taxon>
        <taxon>Ostariophysi</taxon>
        <taxon>Cypriniformes</taxon>
        <taxon>Danionidae</taxon>
        <taxon>Danioninae</taxon>
        <taxon>Danio</taxon>
    </lineage>
</organism>